<organism>
    <name type="scientific">Shigella flexneri</name>
    <dbReference type="NCBI Taxonomy" id="623"/>
    <lineage>
        <taxon>Bacteria</taxon>
        <taxon>Pseudomonadati</taxon>
        <taxon>Pseudomonadota</taxon>
        <taxon>Gammaproteobacteria</taxon>
        <taxon>Enterobacterales</taxon>
        <taxon>Enterobacteriaceae</taxon>
        <taxon>Shigella</taxon>
    </lineage>
</organism>
<feature type="chain" id="PRO_0000281552" description="Zinc import ATP-binding protein ZnuC">
    <location>
        <begin position="1"/>
        <end position="251"/>
    </location>
</feature>
<feature type="domain" description="ABC transporter" evidence="1">
    <location>
        <begin position="5"/>
        <end position="220"/>
    </location>
</feature>
<feature type="binding site" evidence="1">
    <location>
        <begin position="37"/>
        <end position="44"/>
    </location>
    <ligand>
        <name>ATP</name>
        <dbReference type="ChEBI" id="CHEBI:30616"/>
    </ligand>
</feature>
<dbReference type="EC" id="7.2.2.20" evidence="1"/>
<dbReference type="EMBL" id="AE005674">
    <property type="protein sequence ID" value="AAN43425.1"/>
    <property type="molecule type" value="Genomic_DNA"/>
</dbReference>
<dbReference type="EMBL" id="AE014073">
    <property type="protein sequence ID" value="AAP17249.1"/>
    <property type="molecule type" value="Genomic_DNA"/>
</dbReference>
<dbReference type="RefSeq" id="NP_707718.1">
    <property type="nucleotide sequence ID" value="NC_004337.2"/>
</dbReference>
<dbReference type="RefSeq" id="WP_000202992.1">
    <property type="nucleotide sequence ID" value="NZ_WPGW01000041.1"/>
</dbReference>
<dbReference type="SMR" id="Q83KR7"/>
<dbReference type="STRING" id="198214.SF1867"/>
<dbReference type="PaxDb" id="198214-SF1867"/>
<dbReference type="GeneID" id="1025031"/>
<dbReference type="KEGG" id="sfl:SF1867"/>
<dbReference type="KEGG" id="sfx:S1934"/>
<dbReference type="PATRIC" id="fig|198214.7.peg.2226"/>
<dbReference type="HOGENOM" id="CLU_000604_1_11_6"/>
<dbReference type="Proteomes" id="UP000001006">
    <property type="component" value="Chromosome"/>
</dbReference>
<dbReference type="Proteomes" id="UP000002673">
    <property type="component" value="Chromosome"/>
</dbReference>
<dbReference type="GO" id="GO:0005886">
    <property type="term" value="C:plasma membrane"/>
    <property type="evidence" value="ECO:0007669"/>
    <property type="project" value="UniProtKB-SubCell"/>
</dbReference>
<dbReference type="GO" id="GO:0015633">
    <property type="term" value="F:ABC-type zinc transporter activity"/>
    <property type="evidence" value="ECO:0007669"/>
    <property type="project" value="UniProtKB-EC"/>
</dbReference>
<dbReference type="GO" id="GO:0005524">
    <property type="term" value="F:ATP binding"/>
    <property type="evidence" value="ECO:0007669"/>
    <property type="project" value="UniProtKB-KW"/>
</dbReference>
<dbReference type="GO" id="GO:0016887">
    <property type="term" value="F:ATP hydrolysis activity"/>
    <property type="evidence" value="ECO:0007669"/>
    <property type="project" value="InterPro"/>
</dbReference>
<dbReference type="GO" id="GO:0010043">
    <property type="term" value="P:response to zinc ion"/>
    <property type="evidence" value="ECO:0007669"/>
    <property type="project" value="TreeGrafter"/>
</dbReference>
<dbReference type="CDD" id="cd03235">
    <property type="entry name" value="ABC_Metallic_Cations"/>
    <property type="match status" value="1"/>
</dbReference>
<dbReference type="FunFam" id="3.40.50.300:FF:000392">
    <property type="entry name" value="Zinc import ATP-binding protein ZnuC"/>
    <property type="match status" value="1"/>
</dbReference>
<dbReference type="Gene3D" id="3.40.50.300">
    <property type="entry name" value="P-loop containing nucleotide triphosphate hydrolases"/>
    <property type="match status" value="1"/>
</dbReference>
<dbReference type="InterPro" id="IPR003593">
    <property type="entry name" value="AAA+_ATPase"/>
</dbReference>
<dbReference type="InterPro" id="IPR003439">
    <property type="entry name" value="ABC_transporter-like_ATP-bd"/>
</dbReference>
<dbReference type="InterPro" id="IPR050153">
    <property type="entry name" value="Metal_Ion_Import_ABC"/>
</dbReference>
<dbReference type="InterPro" id="IPR027417">
    <property type="entry name" value="P-loop_NTPase"/>
</dbReference>
<dbReference type="NCBIfam" id="NF007090">
    <property type="entry name" value="PRK09544.1"/>
    <property type="match status" value="1"/>
</dbReference>
<dbReference type="PANTHER" id="PTHR42734">
    <property type="entry name" value="METAL TRANSPORT SYSTEM ATP-BINDING PROTEIN TM_0124-RELATED"/>
    <property type="match status" value="1"/>
</dbReference>
<dbReference type="PANTHER" id="PTHR42734:SF9">
    <property type="entry name" value="ZINC IMPORT ATP-BINDING PROTEIN ZNUC"/>
    <property type="match status" value="1"/>
</dbReference>
<dbReference type="Pfam" id="PF00005">
    <property type="entry name" value="ABC_tran"/>
    <property type="match status" value="1"/>
</dbReference>
<dbReference type="SMART" id="SM00382">
    <property type="entry name" value="AAA"/>
    <property type="match status" value="1"/>
</dbReference>
<dbReference type="SUPFAM" id="SSF52540">
    <property type="entry name" value="P-loop containing nucleoside triphosphate hydrolases"/>
    <property type="match status" value="1"/>
</dbReference>
<dbReference type="PROSITE" id="PS50893">
    <property type="entry name" value="ABC_TRANSPORTER_2"/>
    <property type="match status" value="1"/>
</dbReference>
<dbReference type="PROSITE" id="PS51298">
    <property type="entry name" value="ZNUC"/>
    <property type="match status" value="1"/>
</dbReference>
<reference key="1">
    <citation type="journal article" date="2002" name="Nucleic Acids Res.">
        <title>Genome sequence of Shigella flexneri 2a: insights into pathogenicity through comparison with genomes of Escherichia coli K12 and O157.</title>
        <authorList>
            <person name="Jin Q."/>
            <person name="Yuan Z."/>
            <person name="Xu J."/>
            <person name="Wang Y."/>
            <person name="Shen Y."/>
            <person name="Lu W."/>
            <person name="Wang J."/>
            <person name="Liu H."/>
            <person name="Yang J."/>
            <person name="Yang F."/>
            <person name="Zhang X."/>
            <person name="Zhang J."/>
            <person name="Yang G."/>
            <person name="Wu H."/>
            <person name="Qu D."/>
            <person name="Dong J."/>
            <person name="Sun L."/>
            <person name="Xue Y."/>
            <person name="Zhao A."/>
            <person name="Gao Y."/>
            <person name="Zhu J."/>
            <person name="Kan B."/>
            <person name="Ding K."/>
            <person name="Chen S."/>
            <person name="Cheng H."/>
            <person name="Yao Z."/>
            <person name="He B."/>
            <person name="Chen R."/>
            <person name="Ma D."/>
            <person name="Qiang B."/>
            <person name="Wen Y."/>
            <person name="Hou Y."/>
            <person name="Yu J."/>
        </authorList>
    </citation>
    <scope>NUCLEOTIDE SEQUENCE [LARGE SCALE GENOMIC DNA]</scope>
    <source>
        <strain>301 / Serotype 2a</strain>
    </source>
</reference>
<reference key="2">
    <citation type="journal article" date="2003" name="Infect. Immun.">
        <title>Complete genome sequence and comparative genomics of Shigella flexneri serotype 2a strain 2457T.</title>
        <authorList>
            <person name="Wei J."/>
            <person name="Goldberg M.B."/>
            <person name="Burland V."/>
            <person name="Venkatesan M.M."/>
            <person name="Deng W."/>
            <person name="Fournier G."/>
            <person name="Mayhew G.F."/>
            <person name="Plunkett G. III"/>
            <person name="Rose D.J."/>
            <person name="Darling A."/>
            <person name="Mau B."/>
            <person name="Perna N.T."/>
            <person name="Payne S.M."/>
            <person name="Runyen-Janecky L.J."/>
            <person name="Zhou S."/>
            <person name="Schwartz D.C."/>
            <person name="Blattner F.R."/>
        </authorList>
    </citation>
    <scope>NUCLEOTIDE SEQUENCE [LARGE SCALE GENOMIC DNA]</scope>
    <source>
        <strain>ATCC 700930 / 2457T / Serotype 2a</strain>
    </source>
</reference>
<gene>
    <name evidence="1" type="primary">znuC</name>
    <name type="ordered locus">SF1867</name>
    <name type="ordered locus">S1934</name>
</gene>
<comment type="function">
    <text evidence="1">Part of the ABC transporter complex ZnuABC involved in zinc import. Responsible for energy coupling to the transport system.</text>
</comment>
<comment type="catalytic activity">
    <reaction evidence="1">
        <text>Zn(2+)(out) + ATP(in) + H2O(in) = Zn(2+)(in) + ADP(in) + phosphate(in) + H(+)(in)</text>
        <dbReference type="Rhea" id="RHEA:29795"/>
        <dbReference type="ChEBI" id="CHEBI:15377"/>
        <dbReference type="ChEBI" id="CHEBI:15378"/>
        <dbReference type="ChEBI" id="CHEBI:29105"/>
        <dbReference type="ChEBI" id="CHEBI:30616"/>
        <dbReference type="ChEBI" id="CHEBI:43474"/>
        <dbReference type="ChEBI" id="CHEBI:456216"/>
        <dbReference type="EC" id="7.2.2.20"/>
    </reaction>
</comment>
<comment type="subunit">
    <text evidence="1">The complex is composed of two ATP-binding proteins (ZnuC), two transmembrane proteins (ZnuB) and a solute-binding protein (ZnuA).</text>
</comment>
<comment type="subcellular location">
    <subcellularLocation>
        <location evidence="1">Cell inner membrane</location>
        <topology evidence="1">Peripheral membrane protein</topology>
    </subcellularLocation>
</comment>
<comment type="similarity">
    <text evidence="1">Belongs to the ABC transporter superfamily. Zinc importer (TC 3.A.1.15.5) family.</text>
</comment>
<proteinExistence type="inferred from homology"/>
<keyword id="KW-0067">ATP-binding</keyword>
<keyword id="KW-0997">Cell inner membrane</keyword>
<keyword id="KW-1003">Cell membrane</keyword>
<keyword id="KW-0406">Ion transport</keyword>
<keyword id="KW-0472">Membrane</keyword>
<keyword id="KW-0547">Nucleotide-binding</keyword>
<keyword id="KW-1185">Reference proteome</keyword>
<keyword id="KW-1278">Translocase</keyword>
<keyword id="KW-0813">Transport</keyword>
<keyword id="KW-0862">Zinc</keyword>
<keyword id="KW-0864">Zinc transport</keyword>
<name>ZNUC_SHIFL</name>
<accession>Q83KR7</accession>
<accession>Q7C1B2</accession>
<evidence type="ECO:0000255" key="1">
    <source>
        <dbReference type="HAMAP-Rule" id="MF_01725"/>
    </source>
</evidence>
<sequence length="251" mass="27814">MTSLVSLENVSVSFGQRRVLSDVSLELKPGKILTLLGPNGAGKSTLVRVVLGLVTPDEGVIKRNGKLRIGYVPQKLYLDTTLPLTVNRFLRLRPGTHKEDILPALKRVQAGHLINAPMQKLSGGETQRVLLARALLNCPQLLVLDEPTQGVDVNGQVALYDLIDQLRRELDCGVLMVSHDLHLVMAKTDEVLCLNHHICCSGTPEVVSLHPEFISMFGPRGAEQLGIYRHHHNHRHDLQGRIVLRRGNDRS</sequence>
<protein>
    <recommendedName>
        <fullName evidence="1">Zinc import ATP-binding protein ZnuC</fullName>
        <ecNumber evidence="1">7.2.2.20</ecNumber>
    </recommendedName>
</protein>